<feature type="chain" id="PRO_1000088125" description="Bifunctional protein GlmU">
    <location>
        <begin position="1"/>
        <end position="454"/>
    </location>
</feature>
<feature type="region of interest" description="Pyrophosphorylase" evidence="1">
    <location>
        <begin position="1"/>
        <end position="232"/>
    </location>
</feature>
<feature type="region of interest" description="Linker" evidence="1">
    <location>
        <begin position="233"/>
        <end position="253"/>
    </location>
</feature>
<feature type="region of interest" description="N-acetyltransferase" evidence="1">
    <location>
        <begin position="254"/>
        <end position="454"/>
    </location>
</feature>
<feature type="active site" description="Proton acceptor" evidence="1">
    <location>
        <position position="349"/>
    </location>
</feature>
<feature type="binding site" evidence="1">
    <location>
        <begin position="11"/>
        <end position="14"/>
    </location>
    <ligand>
        <name>UDP-N-acetyl-alpha-D-glucosamine</name>
        <dbReference type="ChEBI" id="CHEBI:57705"/>
    </ligand>
</feature>
<feature type="binding site" evidence="1">
    <location>
        <position position="25"/>
    </location>
    <ligand>
        <name>UDP-N-acetyl-alpha-D-glucosamine</name>
        <dbReference type="ChEBI" id="CHEBI:57705"/>
    </ligand>
</feature>
<feature type="binding site" evidence="1">
    <location>
        <position position="78"/>
    </location>
    <ligand>
        <name>UDP-N-acetyl-alpha-D-glucosamine</name>
        <dbReference type="ChEBI" id="CHEBI:57705"/>
    </ligand>
</feature>
<feature type="binding site" evidence="1">
    <location>
        <begin position="83"/>
        <end position="84"/>
    </location>
    <ligand>
        <name>UDP-N-acetyl-alpha-D-glucosamine</name>
        <dbReference type="ChEBI" id="CHEBI:57705"/>
    </ligand>
</feature>
<feature type="binding site" evidence="1">
    <location>
        <position position="108"/>
    </location>
    <ligand>
        <name>Mg(2+)</name>
        <dbReference type="ChEBI" id="CHEBI:18420"/>
    </ligand>
</feature>
<feature type="binding site" evidence="1">
    <location>
        <position position="144"/>
    </location>
    <ligand>
        <name>UDP-N-acetyl-alpha-D-glucosamine</name>
        <dbReference type="ChEBI" id="CHEBI:57705"/>
    </ligand>
</feature>
<feature type="binding site" evidence="1">
    <location>
        <position position="158"/>
    </location>
    <ligand>
        <name>UDP-N-acetyl-alpha-D-glucosamine</name>
        <dbReference type="ChEBI" id="CHEBI:57705"/>
    </ligand>
</feature>
<feature type="binding site" evidence="1">
    <location>
        <position position="173"/>
    </location>
    <ligand>
        <name>UDP-N-acetyl-alpha-D-glucosamine</name>
        <dbReference type="ChEBI" id="CHEBI:57705"/>
    </ligand>
</feature>
<feature type="binding site" evidence="1">
    <location>
        <position position="230"/>
    </location>
    <ligand>
        <name>Mg(2+)</name>
        <dbReference type="ChEBI" id="CHEBI:18420"/>
    </ligand>
</feature>
<feature type="binding site" evidence="1">
    <location>
        <position position="230"/>
    </location>
    <ligand>
        <name>UDP-N-acetyl-alpha-D-glucosamine</name>
        <dbReference type="ChEBI" id="CHEBI:57705"/>
    </ligand>
</feature>
<feature type="binding site" evidence="1">
    <location>
        <position position="319"/>
    </location>
    <ligand>
        <name>UDP-N-acetyl-alpha-D-glucosamine</name>
        <dbReference type="ChEBI" id="CHEBI:57705"/>
    </ligand>
</feature>
<feature type="binding site" evidence="1">
    <location>
        <position position="337"/>
    </location>
    <ligand>
        <name>UDP-N-acetyl-alpha-D-glucosamine</name>
        <dbReference type="ChEBI" id="CHEBI:57705"/>
    </ligand>
</feature>
<feature type="binding site" evidence="1">
    <location>
        <position position="352"/>
    </location>
    <ligand>
        <name>UDP-N-acetyl-alpha-D-glucosamine</name>
        <dbReference type="ChEBI" id="CHEBI:57705"/>
    </ligand>
</feature>
<feature type="binding site" evidence="1">
    <location>
        <position position="363"/>
    </location>
    <ligand>
        <name>UDP-N-acetyl-alpha-D-glucosamine</name>
        <dbReference type="ChEBI" id="CHEBI:57705"/>
    </ligand>
</feature>
<feature type="binding site" evidence="1">
    <location>
        <position position="366"/>
    </location>
    <ligand>
        <name>acetyl-CoA</name>
        <dbReference type="ChEBI" id="CHEBI:57288"/>
    </ligand>
</feature>
<feature type="binding site" evidence="1">
    <location>
        <begin position="372"/>
        <end position="373"/>
    </location>
    <ligand>
        <name>acetyl-CoA</name>
        <dbReference type="ChEBI" id="CHEBI:57288"/>
    </ligand>
</feature>
<feature type="binding site" evidence="1">
    <location>
        <position position="391"/>
    </location>
    <ligand>
        <name>acetyl-CoA</name>
        <dbReference type="ChEBI" id="CHEBI:57288"/>
    </ligand>
</feature>
<feature type="binding site" evidence="1">
    <location>
        <position position="409"/>
    </location>
    <ligand>
        <name>acetyl-CoA</name>
        <dbReference type="ChEBI" id="CHEBI:57288"/>
    </ligand>
</feature>
<feature type="binding site" evidence="1">
    <location>
        <position position="426"/>
    </location>
    <ligand>
        <name>acetyl-CoA</name>
        <dbReference type="ChEBI" id="CHEBI:57288"/>
    </ligand>
</feature>
<reference key="1">
    <citation type="submission" date="2007-12" db="EMBL/GenBank/DDBJ databases">
        <title>Brucella suis ATCC 23445 whole genome shotgun sequencing project.</title>
        <authorList>
            <person name="Setubal J.C."/>
            <person name="Bowns C."/>
            <person name="Boyle S."/>
            <person name="Crasta O.R."/>
            <person name="Czar M.J."/>
            <person name="Dharmanolla C."/>
            <person name="Gillespie J.J."/>
            <person name="Kenyon R.W."/>
            <person name="Lu J."/>
            <person name="Mane S."/>
            <person name="Mohapatra S."/>
            <person name="Nagrani S."/>
            <person name="Purkayastha A."/>
            <person name="Rajasimha H.K."/>
            <person name="Shallom J.M."/>
            <person name="Shallom S."/>
            <person name="Shukla M."/>
            <person name="Snyder E.E."/>
            <person name="Sobral B.W."/>
            <person name="Wattam A.R."/>
            <person name="Will R."/>
            <person name="Williams K."/>
            <person name="Yoo H."/>
            <person name="Bruce D."/>
            <person name="Detter C."/>
            <person name="Munk C."/>
            <person name="Brettin T.S."/>
        </authorList>
    </citation>
    <scope>NUCLEOTIDE SEQUENCE [LARGE SCALE GENOMIC DNA]</scope>
    <source>
        <strain>ATCC 23445 / NCTC 10510</strain>
    </source>
</reference>
<comment type="function">
    <text evidence="1">Catalyzes the last two sequential reactions in the de novo biosynthetic pathway for UDP-N-acetylglucosamine (UDP-GlcNAc). The C-terminal domain catalyzes the transfer of acetyl group from acetyl coenzyme A to glucosamine-1-phosphate (GlcN-1-P) to produce N-acetylglucosamine-1-phosphate (GlcNAc-1-P), which is converted into UDP-GlcNAc by the transfer of uridine 5-monophosphate (from uridine 5-triphosphate), a reaction catalyzed by the N-terminal domain.</text>
</comment>
<comment type="catalytic activity">
    <reaction evidence="1">
        <text>alpha-D-glucosamine 1-phosphate + acetyl-CoA = N-acetyl-alpha-D-glucosamine 1-phosphate + CoA + H(+)</text>
        <dbReference type="Rhea" id="RHEA:13725"/>
        <dbReference type="ChEBI" id="CHEBI:15378"/>
        <dbReference type="ChEBI" id="CHEBI:57287"/>
        <dbReference type="ChEBI" id="CHEBI:57288"/>
        <dbReference type="ChEBI" id="CHEBI:57776"/>
        <dbReference type="ChEBI" id="CHEBI:58516"/>
        <dbReference type="EC" id="2.3.1.157"/>
    </reaction>
</comment>
<comment type="catalytic activity">
    <reaction evidence="1">
        <text>N-acetyl-alpha-D-glucosamine 1-phosphate + UTP + H(+) = UDP-N-acetyl-alpha-D-glucosamine + diphosphate</text>
        <dbReference type="Rhea" id="RHEA:13509"/>
        <dbReference type="ChEBI" id="CHEBI:15378"/>
        <dbReference type="ChEBI" id="CHEBI:33019"/>
        <dbReference type="ChEBI" id="CHEBI:46398"/>
        <dbReference type="ChEBI" id="CHEBI:57705"/>
        <dbReference type="ChEBI" id="CHEBI:57776"/>
        <dbReference type="EC" id="2.7.7.23"/>
    </reaction>
</comment>
<comment type="cofactor">
    <cofactor evidence="1">
        <name>Mg(2+)</name>
        <dbReference type="ChEBI" id="CHEBI:18420"/>
    </cofactor>
    <text evidence="1">Binds 1 Mg(2+) ion per subunit.</text>
</comment>
<comment type="pathway">
    <text evidence="1">Nucleotide-sugar biosynthesis; UDP-N-acetyl-alpha-D-glucosamine biosynthesis; N-acetyl-alpha-D-glucosamine 1-phosphate from alpha-D-glucosamine 6-phosphate (route II): step 2/2.</text>
</comment>
<comment type="pathway">
    <text evidence="1">Nucleotide-sugar biosynthesis; UDP-N-acetyl-alpha-D-glucosamine biosynthesis; UDP-N-acetyl-alpha-D-glucosamine from N-acetyl-alpha-D-glucosamine 1-phosphate: step 1/1.</text>
</comment>
<comment type="pathway">
    <text evidence="1">Bacterial outer membrane biogenesis; LPS lipid A biosynthesis.</text>
</comment>
<comment type="subunit">
    <text evidence="1">Homotrimer.</text>
</comment>
<comment type="subcellular location">
    <subcellularLocation>
        <location evidence="1">Cytoplasm</location>
    </subcellularLocation>
</comment>
<comment type="similarity">
    <text evidence="1">In the N-terminal section; belongs to the N-acetylglucosamine-1-phosphate uridyltransferase family.</text>
</comment>
<comment type="similarity">
    <text evidence="1">In the C-terminal section; belongs to the transferase hexapeptide repeat family.</text>
</comment>
<accession>A9WYQ2</accession>
<dbReference type="EC" id="2.7.7.23" evidence="1"/>
<dbReference type="EC" id="2.3.1.157" evidence="1"/>
<dbReference type="EMBL" id="CP000912">
    <property type="protein sequence ID" value="ABY39568.1"/>
    <property type="molecule type" value="Genomic_DNA"/>
</dbReference>
<dbReference type="RefSeq" id="WP_004689006.1">
    <property type="nucleotide sequence ID" value="NC_010167.1"/>
</dbReference>
<dbReference type="SMR" id="A9WYQ2"/>
<dbReference type="GeneID" id="97535293"/>
<dbReference type="KEGG" id="bmt:BSUIS_B0579"/>
<dbReference type="HOGENOM" id="CLU_029499_15_2_5"/>
<dbReference type="UniPathway" id="UPA00113">
    <property type="reaction ID" value="UER00532"/>
</dbReference>
<dbReference type="UniPathway" id="UPA00113">
    <property type="reaction ID" value="UER00533"/>
</dbReference>
<dbReference type="UniPathway" id="UPA00973"/>
<dbReference type="Proteomes" id="UP000008545">
    <property type="component" value="Chromosome II"/>
</dbReference>
<dbReference type="GO" id="GO:0005737">
    <property type="term" value="C:cytoplasm"/>
    <property type="evidence" value="ECO:0007669"/>
    <property type="project" value="UniProtKB-SubCell"/>
</dbReference>
<dbReference type="GO" id="GO:0016020">
    <property type="term" value="C:membrane"/>
    <property type="evidence" value="ECO:0007669"/>
    <property type="project" value="GOC"/>
</dbReference>
<dbReference type="GO" id="GO:0019134">
    <property type="term" value="F:glucosamine-1-phosphate N-acetyltransferase activity"/>
    <property type="evidence" value="ECO:0007669"/>
    <property type="project" value="UniProtKB-UniRule"/>
</dbReference>
<dbReference type="GO" id="GO:0000287">
    <property type="term" value="F:magnesium ion binding"/>
    <property type="evidence" value="ECO:0007669"/>
    <property type="project" value="UniProtKB-UniRule"/>
</dbReference>
<dbReference type="GO" id="GO:0003977">
    <property type="term" value="F:UDP-N-acetylglucosamine diphosphorylase activity"/>
    <property type="evidence" value="ECO:0007669"/>
    <property type="project" value="UniProtKB-UniRule"/>
</dbReference>
<dbReference type="GO" id="GO:0000902">
    <property type="term" value="P:cell morphogenesis"/>
    <property type="evidence" value="ECO:0007669"/>
    <property type="project" value="UniProtKB-UniRule"/>
</dbReference>
<dbReference type="GO" id="GO:0071555">
    <property type="term" value="P:cell wall organization"/>
    <property type="evidence" value="ECO:0007669"/>
    <property type="project" value="UniProtKB-KW"/>
</dbReference>
<dbReference type="GO" id="GO:0009245">
    <property type="term" value="P:lipid A biosynthetic process"/>
    <property type="evidence" value="ECO:0007669"/>
    <property type="project" value="UniProtKB-UniRule"/>
</dbReference>
<dbReference type="GO" id="GO:0009252">
    <property type="term" value="P:peptidoglycan biosynthetic process"/>
    <property type="evidence" value="ECO:0007669"/>
    <property type="project" value="UniProtKB-UniRule"/>
</dbReference>
<dbReference type="GO" id="GO:0008360">
    <property type="term" value="P:regulation of cell shape"/>
    <property type="evidence" value="ECO:0007669"/>
    <property type="project" value="UniProtKB-KW"/>
</dbReference>
<dbReference type="GO" id="GO:0006048">
    <property type="term" value="P:UDP-N-acetylglucosamine biosynthetic process"/>
    <property type="evidence" value="ECO:0007669"/>
    <property type="project" value="UniProtKB-UniPathway"/>
</dbReference>
<dbReference type="CDD" id="cd02540">
    <property type="entry name" value="GT2_GlmU_N_bac"/>
    <property type="match status" value="1"/>
</dbReference>
<dbReference type="CDD" id="cd03353">
    <property type="entry name" value="LbH_GlmU_C"/>
    <property type="match status" value="1"/>
</dbReference>
<dbReference type="Gene3D" id="2.160.10.10">
    <property type="entry name" value="Hexapeptide repeat proteins"/>
    <property type="match status" value="1"/>
</dbReference>
<dbReference type="Gene3D" id="3.90.550.10">
    <property type="entry name" value="Spore Coat Polysaccharide Biosynthesis Protein SpsA, Chain A"/>
    <property type="match status" value="1"/>
</dbReference>
<dbReference type="HAMAP" id="MF_01631">
    <property type="entry name" value="GlmU"/>
    <property type="match status" value="1"/>
</dbReference>
<dbReference type="InterPro" id="IPR005882">
    <property type="entry name" value="Bifunctional_GlmU"/>
</dbReference>
<dbReference type="InterPro" id="IPR050065">
    <property type="entry name" value="GlmU-like"/>
</dbReference>
<dbReference type="InterPro" id="IPR038009">
    <property type="entry name" value="GlmU_C_LbH"/>
</dbReference>
<dbReference type="InterPro" id="IPR001451">
    <property type="entry name" value="Hexapep"/>
</dbReference>
<dbReference type="InterPro" id="IPR018357">
    <property type="entry name" value="Hexapep_transf_CS"/>
</dbReference>
<dbReference type="InterPro" id="IPR025877">
    <property type="entry name" value="MobA-like_NTP_Trfase"/>
</dbReference>
<dbReference type="InterPro" id="IPR029044">
    <property type="entry name" value="Nucleotide-diphossugar_trans"/>
</dbReference>
<dbReference type="InterPro" id="IPR011004">
    <property type="entry name" value="Trimer_LpxA-like_sf"/>
</dbReference>
<dbReference type="NCBIfam" id="TIGR01173">
    <property type="entry name" value="glmU"/>
    <property type="match status" value="1"/>
</dbReference>
<dbReference type="NCBIfam" id="NF010933">
    <property type="entry name" value="PRK14353.1"/>
    <property type="match status" value="1"/>
</dbReference>
<dbReference type="PANTHER" id="PTHR43584:SF3">
    <property type="entry name" value="BIFUNCTIONAL PROTEIN GLMU"/>
    <property type="match status" value="1"/>
</dbReference>
<dbReference type="PANTHER" id="PTHR43584">
    <property type="entry name" value="NUCLEOTIDYL TRANSFERASE"/>
    <property type="match status" value="1"/>
</dbReference>
<dbReference type="Pfam" id="PF00132">
    <property type="entry name" value="Hexapep"/>
    <property type="match status" value="1"/>
</dbReference>
<dbReference type="Pfam" id="PF12804">
    <property type="entry name" value="NTP_transf_3"/>
    <property type="match status" value="1"/>
</dbReference>
<dbReference type="SUPFAM" id="SSF53448">
    <property type="entry name" value="Nucleotide-diphospho-sugar transferases"/>
    <property type="match status" value="1"/>
</dbReference>
<dbReference type="SUPFAM" id="SSF51161">
    <property type="entry name" value="Trimeric LpxA-like enzymes"/>
    <property type="match status" value="1"/>
</dbReference>
<dbReference type="PROSITE" id="PS00101">
    <property type="entry name" value="HEXAPEP_TRANSFERASES"/>
    <property type="match status" value="1"/>
</dbReference>
<gene>
    <name evidence="1" type="primary">glmU</name>
    <name type="ordered locus">BSUIS_B0579</name>
</gene>
<organism>
    <name type="scientific">Brucella suis (strain ATCC 23445 / NCTC 10510)</name>
    <dbReference type="NCBI Taxonomy" id="470137"/>
    <lineage>
        <taxon>Bacteria</taxon>
        <taxon>Pseudomonadati</taxon>
        <taxon>Pseudomonadota</taxon>
        <taxon>Alphaproteobacteria</taxon>
        <taxon>Hyphomicrobiales</taxon>
        <taxon>Brucellaceae</taxon>
        <taxon>Brucella/Ochrobactrum group</taxon>
        <taxon>Brucella</taxon>
    </lineage>
</organism>
<sequence length="454" mass="47935">MTDRTCLSIVLAAGEGTRMKSNLPKVLHRVAGLPLVCHVVNAVRGTGKSDVALVVGRGAEDVRSAVEKIAGPVSAFEQKERLGTAHAVLAAREAIARGYDDLLIVFGDTPLIEAQSLLAARERLAQGADLVVIGFRPASPHGYGRLIEEGGQLVAIIEEKEATDEQKKIGFCNGGLMALRGQHALALLDAVGNDNAKGEYYLTDIVAIAHGKGLNVTAIEVPVDNVIGINNRAELAEAETIWQNRKRRELMLSGVTLIAPETVFFSYDTVIEPDVVIEPNVFFGPSVHVASGALIHSFSHLEGAQVGEKAEIGPFARLRPGADLAEKSKVGNFCEVKNAKVGKGAKINHLTYIGDAVIGASSNIGAGTITCNYDGYNKFKTIIGDNAFIGSNSSLVAPVEIGDNAYIASGSVITADVPADALALGRARQETKEGRAKILREKYAAIKAAKSVSK</sequence>
<name>GLMU_BRUSI</name>
<protein>
    <recommendedName>
        <fullName evidence="1">Bifunctional protein GlmU</fullName>
    </recommendedName>
    <domain>
        <recommendedName>
            <fullName evidence="1">UDP-N-acetylglucosamine pyrophosphorylase</fullName>
            <ecNumber evidence="1">2.7.7.23</ecNumber>
        </recommendedName>
        <alternativeName>
            <fullName evidence="1">N-acetylglucosamine-1-phosphate uridyltransferase</fullName>
        </alternativeName>
    </domain>
    <domain>
        <recommendedName>
            <fullName evidence="1">Glucosamine-1-phosphate N-acetyltransferase</fullName>
            <ecNumber evidence="1">2.3.1.157</ecNumber>
        </recommendedName>
    </domain>
</protein>
<proteinExistence type="inferred from homology"/>
<evidence type="ECO:0000255" key="1">
    <source>
        <dbReference type="HAMAP-Rule" id="MF_01631"/>
    </source>
</evidence>
<keyword id="KW-0012">Acyltransferase</keyword>
<keyword id="KW-0133">Cell shape</keyword>
<keyword id="KW-0961">Cell wall biogenesis/degradation</keyword>
<keyword id="KW-0963">Cytoplasm</keyword>
<keyword id="KW-0460">Magnesium</keyword>
<keyword id="KW-0479">Metal-binding</keyword>
<keyword id="KW-0511">Multifunctional enzyme</keyword>
<keyword id="KW-0548">Nucleotidyltransferase</keyword>
<keyword id="KW-0573">Peptidoglycan synthesis</keyword>
<keyword id="KW-0677">Repeat</keyword>
<keyword id="KW-0808">Transferase</keyword>